<comment type="function">
    <text evidence="1">Part of the RFC clamp loader complex which loads the PCNA sliding clamp onto DNA.</text>
</comment>
<comment type="subunit">
    <text evidence="1">Heteromultimer composed of small subunits (RfcS) and large subunits (RfcL).</text>
</comment>
<comment type="similarity">
    <text evidence="1">Belongs to the activator 1 small subunits family. RfcL subfamily.</text>
</comment>
<sequence length="483" mass="53656">MDWAEKYRPRHLNEMVGNREALHQMSEWATRWTVESPPLILYGKPGIGKTSSAWALAHDMNWEVVELNASDQRTKAVIEKVAGGSASTGSLTGAARKLIILDEADNLQGNADRGGARAIAEVIRQARQPLILIANDLYGLDGTIRNLCTKVQFKALPAKSLVPRLREICSREQLTCSAQALTDIAEQSGGDIRSAVTMLYASAIGKDTVGEDDVSISAKDSRASIFDLVAATLGYRQVPSLLDMSMSVDETPDTILQWIEGNLGVLPDRKKTAQAYAALSRADMYLGYTFLTQYYTLWRYATSVMLYGVHDVMKGRPSGYAKIMPPSRWRQMSVAKKQKTIREQLLSDMGTSMHMSASTVRNLYLCPISLLAKQFPEQFAKSYDLDVDKLDILIHDPATSKSIIKKIEDEKKQIEKELKKKKKEEDAKGKKARGSKKEKEPIVEETPSIDSFSSQEPGNPPEQPSTEPVEKDKKSSQSTLFSF</sequence>
<feature type="chain" id="PRO_0000245638" description="Replication factor C large subunit">
    <location>
        <begin position="1"/>
        <end position="483"/>
    </location>
</feature>
<feature type="region of interest" description="Disordered" evidence="2">
    <location>
        <begin position="417"/>
        <end position="483"/>
    </location>
</feature>
<feature type="compositionally biased region" description="Basic and acidic residues" evidence="2">
    <location>
        <begin position="417"/>
        <end position="442"/>
    </location>
</feature>
<feature type="compositionally biased region" description="Polar residues" evidence="2">
    <location>
        <begin position="448"/>
        <end position="457"/>
    </location>
</feature>
<feature type="binding site" evidence="1">
    <location>
        <begin position="43"/>
        <end position="50"/>
    </location>
    <ligand>
        <name>ATP</name>
        <dbReference type="ChEBI" id="CHEBI:30616"/>
    </ligand>
</feature>
<gene>
    <name evidence="1" type="primary">rfcL</name>
    <name type="ordered locus">Mhun_0916</name>
</gene>
<proteinExistence type="inferred from homology"/>
<name>RFCL_METHJ</name>
<dbReference type="EMBL" id="CP000254">
    <property type="protein sequence ID" value="ABD40666.1"/>
    <property type="molecule type" value="Genomic_DNA"/>
</dbReference>
<dbReference type="RefSeq" id="WP_011447945.1">
    <property type="nucleotide sequence ID" value="NC_007796.1"/>
</dbReference>
<dbReference type="SMR" id="Q2FQR4"/>
<dbReference type="FunCoup" id="Q2FQR4">
    <property type="interactions" value="12"/>
</dbReference>
<dbReference type="STRING" id="323259.Mhun_0916"/>
<dbReference type="EnsemblBacteria" id="ABD40666">
    <property type="protein sequence ID" value="ABD40666"/>
    <property type="gene ID" value="Mhun_0916"/>
</dbReference>
<dbReference type="GeneID" id="3924142"/>
<dbReference type="KEGG" id="mhu:Mhun_0916"/>
<dbReference type="eggNOG" id="arCOG00470">
    <property type="taxonomic scope" value="Archaea"/>
</dbReference>
<dbReference type="HOGENOM" id="CLU_027255_1_0_2"/>
<dbReference type="InParanoid" id="Q2FQR4"/>
<dbReference type="OrthoDB" id="8658at2157"/>
<dbReference type="Proteomes" id="UP000001941">
    <property type="component" value="Chromosome"/>
</dbReference>
<dbReference type="GO" id="GO:0005524">
    <property type="term" value="F:ATP binding"/>
    <property type="evidence" value="ECO:0007669"/>
    <property type="project" value="UniProtKB-UniRule"/>
</dbReference>
<dbReference type="GO" id="GO:0016887">
    <property type="term" value="F:ATP hydrolysis activity"/>
    <property type="evidence" value="ECO:0007669"/>
    <property type="project" value="InterPro"/>
</dbReference>
<dbReference type="GO" id="GO:0003689">
    <property type="term" value="F:DNA clamp loader activity"/>
    <property type="evidence" value="ECO:0007669"/>
    <property type="project" value="UniProtKB-UniRule"/>
</dbReference>
<dbReference type="GO" id="GO:0006260">
    <property type="term" value="P:DNA replication"/>
    <property type="evidence" value="ECO:0007669"/>
    <property type="project" value="UniProtKB-UniRule"/>
</dbReference>
<dbReference type="CDD" id="cd00009">
    <property type="entry name" value="AAA"/>
    <property type="match status" value="1"/>
</dbReference>
<dbReference type="CDD" id="cd18140">
    <property type="entry name" value="HLD_clamp_RFC"/>
    <property type="match status" value="1"/>
</dbReference>
<dbReference type="Gene3D" id="1.10.8.60">
    <property type="match status" value="1"/>
</dbReference>
<dbReference type="Gene3D" id="3.40.50.300">
    <property type="entry name" value="P-loop containing nucleotide triphosphate hydrolases"/>
    <property type="match status" value="1"/>
</dbReference>
<dbReference type="HAMAP" id="MF_01508">
    <property type="entry name" value="RfcL"/>
    <property type="match status" value="1"/>
</dbReference>
<dbReference type="InterPro" id="IPR003593">
    <property type="entry name" value="AAA+_ATPase"/>
</dbReference>
<dbReference type="InterPro" id="IPR003959">
    <property type="entry name" value="ATPase_AAA_core"/>
</dbReference>
<dbReference type="InterPro" id="IPR027417">
    <property type="entry name" value="P-loop_NTPase"/>
</dbReference>
<dbReference type="InterPro" id="IPR023935">
    <property type="entry name" value="Rep_factor-C_lsu"/>
</dbReference>
<dbReference type="InterPro" id="IPR047854">
    <property type="entry name" value="RFC_lid"/>
</dbReference>
<dbReference type="NCBIfam" id="NF003229">
    <property type="entry name" value="PRK04195.1-5"/>
    <property type="match status" value="1"/>
</dbReference>
<dbReference type="NCBIfam" id="NF003232">
    <property type="entry name" value="PRK04195.2-2"/>
    <property type="match status" value="1"/>
</dbReference>
<dbReference type="PANTHER" id="PTHR23389">
    <property type="entry name" value="CHROMOSOME TRANSMISSION FIDELITY FACTOR 18"/>
    <property type="match status" value="1"/>
</dbReference>
<dbReference type="PANTHER" id="PTHR23389:SF6">
    <property type="entry name" value="REPLICATION FACTOR C SUBUNIT 1"/>
    <property type="match status" value="1"/>
</dbReference>
<dbReference type="Pfam" id="PF00004">
    <property type="entry name" value="AAA"/>
    <property type="match status" value="1"/>
</dbReference>
<dbReference type="Pfam" id="PF21960">
    <property type="entry name" value="RCF1-5-like_lid"/>
    <property type="match status" value="1"/>
</dbReference>
<dbReference type="SMART" id="SM00382">
    <property type="entry name" value="AAA"/>
    <property type="match status" value="1"/>
</dbReference>
<dbReference type="SUPFAM" id="SSF52540">
    <property type="entry name" value="P-loop containing nucleoside triphosphate hydrolases"/>
    <property type="match status" value="1"/>
</dbReference>
<evidence type="ECO:0000255" key="1">
    <source>
        <dbReference type="HAMAP-Rule" id="MF_01508"/>
    </source>
</evidence>
<evidence type="ECO:0000256" key="2">
    <source>
        <dbReference type="SAM" id="MobiDB-lite"/>
    </source>
</evidence>
<organism>
    <name type="scientific">Methanospirillum hungatei JF-1 (strain ATCC 27890 / DSM 864 / NBRC 100397 / JF-1)</name>
    <dbReference type="NCBI Taxonomy" id="323259"/>
    <lineage>
        <taxon>Archaea</taxon>
        <taxon>Methanobacteriati</taxon>
        <taxon>Methanobacteriota</taxon>
        <taxon>Stenosarchaea group</taxon>
        <taxon>Methanomicrobia</taxon>
        <taxon>Methanomicrobiales</taxon>
        <taxon>Methanospirillaceae</taxon>
        <taxon>Methanospirillum</taxon>
    </lineage>
</organism>
<protein>
    <recommendedName>
        <fullName evidence="1">Replication factor C large subunit</fullName>
        <shortName evidence="1">RFC large subunit</shortName>
    </recommendedName>
    <alternativeName>
        <fullName evidence="1">Clamp loader large subunit</fullName>
    </alternativeName>
</protein>
<reference key="1">
    <citation type="journal article" date="2016" name="Stand. Genomic Sci.">
        <title>Complete genome sequence of Methanospirillum hungatei type strain JF1.</title>
        <authorList>
            <person name="Gunsalus R.P."/>
            <person name="Cook L.E."/>
            <person name="Crable B."/>
            <person name="Rohlin L."/>
            <person name="McDonald E."/>
            <person name="Mouttaki H."/>
            <person name="Sieber J.R."/>
            <person name="Poweleit N."/>
            <person name="Zhou H."/>
            <person name="Lapidus A.L."/>
            <person name="Daligault H.E."/>
            <person name="Land M."/>
            <person name="Gilna P."/>
            <person name="Ivanova N."/>
            <person name="Kyrpides N."/>
            <person name="Culley D.E."/>
            <person name="McInerney M.J."/>
        </authorList>
    </citation>
    <scope>NUCLEOTIDE SEQUENCE [LARGE SCALE GENOMIC DNA]</scope>
    <source>
        <strain>ATCC 27890 / DSM 864 / NBRC 100397 / JF-1</strain>
    </source>
</reference>
<keyword id="KW-0067">ATP-binding</keyword>
<keyword id="KW-0235">DNA replication</keyword>
<keyword id="KW-0547">Nucleotide-binding</keyword>
<keyword id="KW-1185">Reference proteome</keyword>
<accession>Q2FQR4</accession>